<sequence>MILILLFLTAITVITVRLYRKVLRFPPGPFPLPLIGNAHQIAYQAWRRGGILPALDYYRKKYGNAYTLWLGPKASVSITDFETSQEVFVKQGKKCYNRQLAPILEHVTGGVGLLIANGENWAEMRRFTLLTFRQMGVGTNIMEKRIMDELNGRCLEIDAQIARNDRAIVDVKFFDLTVGSVINSFLIGKRFEDEEEFLKIKKLFDESSETFNIFDLNVPVWFLKTFLPSRFKLTWDSRHQIMDHVMKGVEERIRDIESGAYKIDPKKPNDVVDAFLSKMKKEEEIAGGQHPYYNLKSLKLVLHDLWLAGQGTTATTLYVGFMKLVNHPGIIQNIQKELLDITENGARDLTLKDRPNTPYLNATIAEIQRHASILNVNFWRINHETIHFNDYQVDPGTMIAAQVGVLHVNEELFDNPKDFNVEKYLKNPKLLQQVIPFGIGKRSCVGEQIAKSELYLVFGNILLRYNVKKHGSTPTNEDVYPYSSAKLPDVSGKLEFVKL</sequence>
<reference evidence="8" key="1">
    <citation type="journal article" date="1998" name="Science">
        <title>Genome sequence of the nematode C. elegans: a platform for investigating biology.</title>
        <authorList>
            <consortium name="The C. elegans sequencing consortium"/>
        </authorList>
    </citation>
    <scope>NUCLEOTIDE SEQUENCE [LARGE SCALE GENOMIC DNA]</scope>
    <source>
        <strain evidence="8">Bristol N2</strain>
    </source>
</reference>
<reference evidence="6" key="2">
    <citation type="journal article" date="2013" name="PLoS ONE">
        <title>Adaptive and specialised transcriptional responses to xenobiotic stress in Caenorhabditis elegans are regulated by nuclear hormone receptors.</title>
        <authorList>
            <person name="Jones L.M."/>
            <person name="Rayson S.J."/>
            <person name="Flemming A.J."/>
            <person name="Urwin P.E."/>
        </authorList>
    </citation>
    <scope>FUNCTION</scope>
    <scope>TISSUE SPECIFICITY</scope>
    <scope>INDUCTION BY XENOBIOTIC</scope>
</reference>
<reference evidence="6" key="3">
    <citation type="journal article" date="2015" name="Biochem. J.">
        <title>NHR-176 regulates cyp-35d1 to control hydroxylation-dependent metabolism of thiabendazole in Caenorhabditis elegans.</title>
        <authorList>
            <person name="Jones L.M."/>
            <person name="Flemming A.J."/>
            <person name="Urwin P.E."/>
        </authorList>
    </citation>
    <scope>FUNCTION</scope>
    <scope>INDUCTION BY XENOBIOTIC</scope>
    <scope>DISRUPTION PHENOTYPE</scope>
</reference>
<dbReference type="EC" id="1.14.-.-" evidence="4"/>
<dbReference type="EMBL" id="BX284605">
    <property type="protein sequence ID" value="CAB05484.1"/>
    <property type="molecule type" value="Genomic_DNA"/>
</dbReference>
<dbReference type="PIR" id="T20923">
    <property type="entry name" value="T20923"/>
</dbReference>
<dbReference type="RefSeq" id="NP_507044.1">
    <property type="nucleotide sequence ID" value="NM_074643.1"/>
</dbReference>
<dbReference type="SMR" id="O45364"/>
<dbReference type="DIP" id="DIP-25797N"/>
<dbReference type="FunCoup" id="O45364">
    <property type="interactions" value="17"/>
</dbReference>
<dbReference type="IntAct" id="O45364">
    <property type="interactions" value="1"/>
</dbReference>
<dbReference type="STRING" id="6239.F14H3.10.1"/>
<dbReference type="PaxDb" id="6239-F14H3.10"/>
<dbReference type="PeptideAtlas" id="O45364"/>
<dbReference type="EnsemblMetazoa" id="F14H3.10.1">
    <property type="protein sequence ID" value="F14H3.10.1"/>
    <property type="gene ID" value="WBGene00008829"/>
</dbReference>
<dbReference type="GeneID" id="184495"/>
<dbReference type="KEGG" id="cel:CELE_F14H3.10"/>
<dbReference type="UCSC" id="F14H3.10">
    <property type="organism name" value="c. elegans"/>
</dbReference>
<dbReference type="AGR" id="WB:WBGene00008829"/>
<dbReference type="CTD" id="184495"/>
<dbReference type="WormBase" id="F14H3.10">
    <property type="protein sequence ID" value="CE15834"/>
    <property type="gene ID" value="WBGene00008829"/>
    <property type="gene designation" value="cyp-35D1"/>
</dbReference>
<dbReference type="eggNOG" id="KOG0156">
    <property type="taxonomic scope" value="Eukaryota"/>
</dbReference>
<dbReference type="GeneTree" id="ENSGT00940000164994"/>
<dbReference type="HOGENOM" id="CLU_001570_22_3_1"/>
<dbReference type="InParanoid" id="O45364"/>
<dbReference type="OMA" id="QFPFDMD"/>
<dbReference type="OrthoDB" id="1055148at2759"/>
<dbReference type="PhylomeDB" id="O45364"/>
<dbReference type="Reactome" id="R-CEL-211935">
    <property type="pathway name" value="Fatty acids"/>
</dbReference>
<dbReference type="Reactome" id="R-CEL-211945">
    <property type="pathway name" value="Phase I - Functionalization of compounds"/>
</dbReference>
<dbReference type="Reactome" id="R-CEL-211958">
    <property type="pathway name" value="Miscellaneous substrates"/>
</dbReference>
<dbReference type="Reactome" id="R-CEL-211981">
    <property type="pathway name" value="Xenobiotics"/>
</dbReference>
<dbReference type="Reactome" id="R-CEL-211999">
    <property type="pathway name" value="CYP2E1 reactions"/>
</dbReference>
<dbReference type="Reactome" id="R-CEL-2142670">
    <property type="pathway name" value="Synthesis of epoxy (EET) and dihydroxyeicosatrienoic acids (DHET)"/>
</dbReference>
<dbReference type="Reactome" id="R-CEL-2142816">
    <property type="pathway name" value="Synthesis of (16-20)-hydroxyeicosatetraenoic acids (HETE)"/>
</dbReference>
<dbReference type="Reactome" id="R-CEL-5423646">
    <property type="pathway name" value="Aflatoxin activation and detoxification"/>
</dbReference>
<dbReference type="Reactome" id="R-CEL-9027307">
    <property type="pathway name" value="Biosynthesis of maresin-like SPMs"/>
</dbReference>
<dbReference type="Reactome" id="R-CEL-9749641">
    <property type="pathway name" value="Aspirin ADME"/>
</dbReference>
<dbReference type="Reactome" id="R-CEL-9753281">
    <property type="pathway name" value="Paracetamol ADME"/>
</dbReference>
<dbReference type="PRO" id="PR:O45364"/>
<dbReference type="Proteomes" id="UP000001940">
    <property type="component" value="Chromosome V"/>
</dbReference>
<dbReference type="Bgee" id="WBGene00008829">
    <property type="expression patterns" value="Expressed in embryo and 2 other cell types or tissues"/>
</dbReference>
<dbReference type="GO" id="GO:0005737">
    <property type="term" value="C:cytoplasm"/>
    <property type="evidence" value="ECO:0000318"/>
    <property type="project" value="GO_Central"/>
</dbReference>
<dbReference type="GO" id="GO:0043231">
    <property type="term" value="C:intracellular membrane-bounded organelle"/>
    <property type="evidence" value="ECO:0000318"/>
    <property type="project" value="GO_Central"/>
</dbReference>
<dbReference type="GO" id="GO:0020037">
    <property type="term" value="F:heme binding"/>
    <property type="evidence" value="ECO:0000318"/>
    <property type="project" value="GO_Central"/>
</dbReference>
<dbReference type="GO" id="GO:0005506">
    <property type="term" value="F:iron ion binding"/>
    <property type="evidence" value="ECO:0007669"/>
    <property type="project" value="InterPro"/>
</dbReference>
<dbReference type="GO" id="GO:0016712">
    <property type="term" value="F:oxidoreductase activity, acting on paired donors, with incorporation or reduction of molecular oxygen, reduced flavin or flavoprotein as one donor, and incorporation of one atom of oxygen"/>
    <property type="evidence" value="ECO:0000318"/>
    <property type="project" value="GO_Central"/>
</dbReference>
<dbReference type="GO" id="GO:0006082">
    <property type="term" value="P:organic acid metabolic process"/>
    <property type="evidence" value="ECO:0000318"/>
    <property type="project" value="GO_Central"/>
</dbReference>
<dbReference type="GO" id="GO:0006805">
    <property type="term" value="P:xenobiotic metabolic process"/>
    <property type="evidence" value="ECO:0000318"/>
    <property type="project" value="GO_Central"/>
</dbReference>
<dbReference type="CDD" id="cd20617">
    <property type="entry name" value="CYP1_2-like"/>
    <property type="match status" value="1"/>
</dbReference>
<dbReference type="FunFam" id="1.10.630.10:FF:000036">
    <property type="entry name" value="CYtochrome P450 family"/>
    <property type="match status" value="1"/>
</dbReference>
<dbReference type="Gene3D" id="1.10.630.10">
    <property type="entry name" value="Cytochrome P450"/>
    <property type="match status" value="1"/>
</dbReference>
<dbReference type="InterPro" id="IPR001128">
    <property type="entry name" value="Cyt_P450"/>
</dbReference>
<dbReference type="InterPro" id="IPR017972">
    <property type="entry name" value="Cyt_P450_CS"/>
</dbReference>
<dbReference type="InterPro" id="IPR002401">
    <property type="entry name" value="Cyt_P450_E_grp-I"/>
</dbReference>
<dbReference type="InterPro" id="IPR036396">
    <property type="entry name" value="Cyt_P450_sf"/>
</dbReference>
<dbReference type="InterPro" id="IPR050182">
    <property type="entry name" value="Cytochrome_P450_fam2"/>
</dbReference>
<dbReference type="PANTHER" id="PTHR24300">
    <property type="entry name" value="CYTOCHROME P450 508A4-RELATED"/>
    <property type="match status" value="1"/>
</dbReference>
<dbReference type="PANTHER" id="PTHR24300:SF105">
    <property type="entry name" value="CYTOCHROME P450 FAMILY"/>
    <property type="match status" value="1"/>
</dbReference>
<dbReference type="Pfam" id="PF00067">
    <property type="entry name" value="p450"/>
    <property type="match status" value="1"/>
</dbReference>
<dbReference type="PRINTS" id="PR00463">
    <property type="entry name" value="EP450I"/>
</dbReference>
<dbReference type="PRINTS" id="PR00385">
    <property type="entry name" value="P450"/>
</dbReference>
<dbReference type="SUPFAM" id="SSF48264">
    <property type="entry name" value="Cytochrome P450"/>
    <property type="match status" value="1"/>
</dbReference>
<dbReference type="PROSITE" id="PS00086">
    <property type="entry name" value="CYTOCHROME_P450"/>
    <property type="match status" value="1"/>
</dbReference>
<proteinExistence type="evidence at transcript level"/>
<gene>
    <name evidence="9" type="primary">cyp-35d1</name>
    <name evidence="9" type="ORF">F14H3.10</name>
</gene>
<protein>
    <recommendedName>
        <fullName evidence="7">Probable cytochrome P450 cyp-35D1</fullName>
        <ecNumber evidence="4">1.14.-.-</ecNumber>
    </recommendedName>
</protein>
<comment type="function">
    <text evidence="3 4 7">Cytochromes P450 are a group of heme-thiolate monooxygenases (Probable). They oxidize a variety of structurally unrelated compounds, including steroids, fatty acids, and xenobiotics (Probable). Involved in the oxidative metabolism of thiabendazole (TBZ) (PubMed:23922869, PubMed:25406993). Catalyzes the conversion of TBZ to its hydroxylated form (PubMed:23922869, PubMed:25406993).</text>
</comment>
<comment type="cofactor">
    <cofactor evidence="1">
        <name>heme</name>
        <dbReference type="ChEBI" id="CHEBI:30413"/>
    </cofactor>
</comment>
<comment type="tissue specificity">
    <text evidence="3">Expressed in hypodermis, intestine and vulva upon thiabendazole (TBZ) exposure.</text>
</comment>
<comment type="induction">
    <text evidence="3 4">Up-regulated in hypodermis, intestine and vulva following exposure to specific xenobiotics, such as thiabendazole (TBZ) (PubMed:23922869). Expression is up-regulated over 2000-fold by TBZ (PubMed:25406993).</text>
</comment>
<comment type="disruption phenotype">
    <text evidence="4">RNAi-mediated knockdown causes a reduction in the quantity of a hydroxylated thiabendazole (TBZ) metabolite and probably its glucose conjugate.</text>
</comment>
<comment type="miscellaneous">
    <text evidence="5">Thiabendazole (TBZ) is used as a broad-spectrum anthelmintic to treat parasitic nematode infections in humans and veterinary animals.</text>
</comment>
<comment type="similarity">
    <text evidence="2">Belongs to the cytochrome P450 family.</text>
</comment>
<keyword id="KW-0408">Iron</keyword>
<keyword id="KW-0479">Metal-binding</keyword>
<keyword id="KW-0503">Monooxygenase</keyword>
<keyword id="KW-0560">Oxidoreductase</keyword>
<keyword id="KW-1185">Reference proteome</keyword>
<feature type="chain" id="PRO_0000458540" description="Probable cytochrome P450 cyp-35D1">
    <location>
        <begin position="1"/>
        <end position="499"/>
    </location>
</feature>
<feature type="binding site" description="axial binding residue" evidence="1">
    <location>
        <position position="444"/>
    </location>
    <ligand>
        <name>heme</name>
        <dbReference type="ChEBI" id="CHEBI:30413"/>
    </ligand>
    <ligandPart>
        <name>Fe</name>
        <dbReference type="ChEBI" id="CHEBI:18248"/>
    </ligandPart>
</feature>
<organism evidence="8">
    <name type="scientific">Caenorhabditis elegans</name>
    <dbReference type="NCBI Taxonomy" id="6239"/>
    <lineage>
        <taxon>Eukaryota</taxon>
        <taxon>Metazoa</taxon>
        <taxon>Ecdysozoa</taxon>
        <taxon>Nematoda</taxon>
        <taxon>Chromadorea</taxon>
        <taxon>Rhabditida</taxon>
        <taxon>Rhabditina</taxon>
        <taxon>Rhabditomorpha</taxon>
        <taxon>Rhabditoidea</taxon>
        <taxon>Rhabditidae</taxon>
        <taxon>Peloderinae</taxon>
        <taxon>Caenorhabditis</taxon>
    </lineage>
</organism>
<name>C35D1_CAEEL</name>
<evidence type="ECO:0000250" key="1">
    <source>
        <dbReference type="UniProtKB" id="Q16678"/>
    </source>
</evidence>
<evidence type="ECO:0000255" key="2">
    <source>
        <dbReference type="RuleBase" id="RU000461"/>
    </source>
</evidence>
<evidence type="ECO:0000269" key="3">
    <source>
    </source>
</evidence>
<evidence type="ECO:0000269" key="4">
    <source>
    </source>
</evidence>
<evidence type="ECO:0000303" key="5">
    <source>
    </source>
</evidence>
<evidence type="ECO:0000305" key="6"/>
<evidence type="ECO:0000305" key="7">
    <source>
    </source>
</evidence>
<evidence type="ECO:0000312" key="8">
    <source>
        <dbReference type="Proteomes" id="UP000001940"/>
    </source>
</evidence>
<evidence type="ECO:0000312" key="9">
    <source>
        <dbReference type="WormBase" id="F14H3.10"/>
    </source>
</evidence>
<accession>O45364</accession>